<reference key="1">
    <citation type="journal article" date="2016" name="Stand. Genomic Sci.">
        <title>Complete genome sequence of the Antarctic Halorubrum lacusprofundi type strain ACAM 34.</title>
        <authorList>
            <person name="Anderson I.J."/>
            <person name="DasSarma P."/>
            <person name="Lucas S."/>
            <person name="Copeland A."/>
            <person name="Lapidus A."/>
            <person name="Del Rio T.G."/>
            <person name="Tice H."/>
            <person name="Dalin E."/>
            <person name="Bruce D.C."/>
            <person name="Goodwin L."/>
            <person name="Pitluck S."/>
            <person name="Sims D."/>
            <person name="Brettin T.S."/>
            <person name="Detter J.C."/>
            <person name="Han C.S."/>
            <person name="Larimer F."/>
            <person name="Hauser L."/>
            <person name="Land M."/>
            <person name="Ivanova N."/>
            <person name="Richardson P."/>
            <person name="Cavicchioli R."/>
            <person name="DasSarma S."/>
            <person name="Woese C.R."/>
            <person name="Kyrpides N.C."/>
        </authorList>
    </citation>
    <scope>NUCLEOTIDE SEQUENCE [LARGE SCALE GENOMIC DNA]</scope>
    <source>
        <strain>ATCC 49239 / DSM 5036 / JCM 8891 / ACAM 34</strain>
    </source>
</reference>
<sequence length="102" mass="11386">MQQARVRLAGTSPEDLDDICADVREIADSTGVALSGPIPLPTKTLEIPSRKSPDGEGTATWEHWEMRVHKRLIDIDADERALRQLMRVQVPNDVSIEIVLED</sequence>
<proteinExistence type="inferred from homology"/>
<accession>B9LRD9</accession>
<dbReference type="EMBL" id="CP001365">
    <property type="protein sequence ID" value="ACM55762.1"/>
    <property type="molecule type" value="Genomic_DNA"/>
</dbReference>
<dbReference type="SMR" id="B9LRD9"/>
<dbReference type="GeneID" id="7402086"/>
<dbReference type="KEGG" id="hla:Hlac_0157"/>
<dbReference type="eggNOG" id="arCOG01758">
    <property type="taxonomic scope" value="Archaea"/>
</dbReference>
<dbReference type="HOGENOM" id="CLU_122625_0_1_2"/>
<dbReference type="Proteomes" id="UP000000740">
    <property type="component" value="Chromosome 1"/>
</dbReference>
<dbReference type="GO" id="GO:0015935">
    <property type="term" value="C:small ribosomal subunit"/>
    <property type="evidence" value="ECO:0007669"/>
    <property type="project" value="InterPro"/>
</dbReference>
<dbReference type="GO" id="GO:0003735">
    <property type="term" value="F:structural constituent of ribosome"/>
    <property type="evidence" value="ECO:0007669"/>
    <property type="project" value="InterPro"/>
</dbReference>
<dbReference type="GO" id="GO:0000049">
    <property type="term" value="F:tRNA binding"/>
    <property type="evidence" value="ECO:0007669"/>
    <property type="project" value="UniProtKB-UniRule"/>
</dbReference>
<dbReference type="GO" id="GO:0006412">
    <property type="term" value="P:translation"/>
    <property type="evidence" value="ECO:0007669"/>
    <property type="project" value="UniProtKB-UniRule"/>
</dbReference>
<dbReference type="FunFam" id="3.30.70.600:FF:000004">
    <property type="entry name" value="30S ribosomal protein S10"/>
    <property type="match status" value="1"/>
</dbReference>
<dbReference type="Gene3D" id="3.30.70.600">
    <property type="entry name" value="Ribosomal protein S10 domain"/>
    <property type="match status" value="1"/>
</dbReference>
<dbReference type="HAMAP" id="MF_00508">
    <property type="entry name" value="Ribosomal_uS10"/>
    <property type="match status" value="1"/>
</dbReference>
<dbReference type="InterPro" id="IPR001848">
    <property type="entry name" value="Ribosomal_uS10"/>
</dbReference>
<dbReference type="InterPro" id="IPR018268">
    <property type="entry name" value="Ribosomal_uS10_CS"/>
</dbReference>
<dbReference type="InterPro" id="IPR027486">
    <property type="entry name" value="Ribosomal_uS10_dom"/>
</dbReference>
<dbReference type="InterPro" id="IPR036838">
    <property type="entry name" value="Ribosomal_uS10_dom_sf"/>
</dbReference>
<dbReference type="InterPro" id="IPR005729">
    <property type="entry name" value="Ribosomal_uS10_euk/arc"/>
</dbReference>
<dbReference type="NCBIfam" id="TIGR01046">
    <property type="entry name" value="uS10_euk_arch"/>
    <property type="match status" value="1"/>
</dbReference>
<dbReference type="PANTHER" id="PTHR11700">
    <property type="entry name" value="30S RIBOSOMAL PROTEIN S10 FAMILY MEMBER"/>
    <property type="match status" value="1"/>
</dbReference>
<dbReference type="Pfam" id="PF00338">
    <property type="entry name" value="Ribosomal_S10"/>
    <property type="match status" value="1"/>
</dbReference>
<dbReference type="PRINTS" id="PR00971">
    <property type="entry name" value="RIBOSOMALS10"/>
</dbReference>
<dbReference type="SMART" id="SM01403">
    <property type="entry name" value="Ribosomal_S10"/>
    <property type="match status" value="1"/>
</dbReference>
<dbReference type="SUPFAM" id="SSF54999">
    <property type="entry name" value="Ribosomal protein S10"/>
    <property type="match status" value="1"/>
</dbReference>
<dbReference type="PROSITE" id="PS00361">
    <property type="entry name" value="RIBOSOMAL_S10"/>
    <property type="match status" value="1"/>
</dbReference>
<organism>
    <name type="scientific">Halorubrum lacusprofundi (strain ATCC 49239 / DSM 5036 / JCM 8891 / ACAM 34)</name>
    <dbReference type="NCBI Taxonomy" id="416348"/>
    <lineage>
        <taxon>Archaea</taxon>
        <taxon>Methanobacteriati</taxon>
        <taxon>Methanobacteriota</taxon>
        <taxon>Stenosarchaea group</taxon>
        <taxon>Halobacteria</taxon>
        <taxon>Halobacteriales</taxon>
        <taxon>Haloferacaceae</taxon>
        <taxon>Halorubrum</taxon>
    </lineage>
</organism>
<feature type="chain" id="PRO_1000146058" description="Small ribosomal subunit protein uS10">
    <location>
        <begin position="1"/>
        <end position="102"/>
    </location>
</feature>
<feature type="region of interest" description="Disordered" evidence="2">
    <location>
        <begin position="35"/>
        <end position="58"/>
    </location>
</feature>
<evidence type="ECO:0000255" key="1">
    <source>
        <dbReference type="HAMAP-Rule" id="MF_00508"/>
    </source>
</evidence>
<evidence type="ECO:0000256" key="2">
    <source>
        <dbReference type="SAM" id="MobiDB-lite"/>
    </source>
</evidence>
<evidence type="ECO:0000305" key="3"/>
<comment type="function">
    <text evidence="1">Involved in the binding of tRNA to the ribosomes.</text>
</comment>
<comment type="subunit">
    <text evidence="1">Part of the 30S ribosomal subunit.</text>
</comment>
<comment type="similarity">
    <text evidence="1">Belongs to the universal ribosomal protein uS10 family.</text>
</comment>
<name>RS10_HALLT</name>
<keyword id="KW-1185">Reference proteome</keyword>
<keyword id="KW-0687">Ribonucleoprotein</keyword>
<keyword id="KW-0689">Ribosomal protein</keyword>
<protein>
    <recommendedName>
        <fullName evidence="1">Small ribosomal subunit protein uS10</fullName>
    </recommendedName>
    <alternativeName>
        <fullName evidence="3">30S ribosomal protein S10</fullName>
    </alternativeName>
</protein>
<gene>
    <name evidence="1" type="primary">rps10</name>
    <name type="ordered locus">Hlac_0157</name>
</gene>